<gene>
    <name type="primary">APP</name>
</gene>
<dbReference type="EMBL" id="X56128">
    <property type="protein sequence ID" value="CAA39593.1"/>
    <property type="molecule type" value="mRNA"/>
</dbReference>
<dbReference type="PIR" id="B60045">
    <property type="entry name" value="B60045"/>
</dbReference>
<dbReference type="STRING" id="29073.ENSUMAP00000020202"/>
<dbReference type="Proteomes" id="UP000261680">
    <property type="component" value="Unplaced"/>
</dbReference>
<dbReference type="GO" id="GO:0009986">
    <property type="term" value="C:cell surface"/>
    <property type="evidence" value="ECO:0007669"/>
    <property type="project" value="UniProtKB-SubCell"/>
</dbReference>
<dbReference type="GO" id="GO:0005905">
    <property type="term" value="C:clathrin-coated pit"/>
    <property type="evidence" value="ECO:0007669"/>
    <property type="project" value="UniProtKB-SubCell"/>
</dbReference>
<dbReference type="GO" id="GO:0005769">
    <property type="term" value="C:early endosome"/>
    <property type="evidence" value="ECO:0007669"/>
    <property type="project" value="UniProtKB-SubCell"/>
</dbReference>
<dbReference type="GO" id="GO:0005576">
    <property type="term" value="C:extracellular region"/>
    <property type="evidence" value="ECO:0007669"/>
    <property type="project" value="UniProtKB-SubCell"/>
</dbReference>
<dbReference type="GO" id="GO:0005794">
    <property type="term" value="C:Golgi apparatus"/>
    <property type="evidence" value="ECO:0007669"/>
    <property type="project" value="TreeGrafter"/>
</dbReference>
<dbReference type="GO" id="GO:0005798">
    <property type="term" value="C:Golgi-associated vesicle"/>
    <property type="evidence" value="ECO:0000250"/>
    <property type="project" value="UniProtKB"/>
</dbReference>
<dbReference type="GO" id="GO:0030426">
    <property type="term" value="C:growth cone"/>
    <property type="evidence" value="ECO:0007669"/>
    <property type="project" value="UniProtKB-SubCell"/>
</dbReference>
<dbReference type="GO" id="GO:0045121">
    <property type="term" value="C:membrane raft"/>
    <property type="evidence" value="ECO:0007669"/>
    <property type="project" value="TreeGrafter"/>
</dbReference>
<dbReference type="GO" id="GO:0005634">
    <property type="term" value="C:nucleus"/>
    <property type="evidence" value="ECO:0007669"/>
    <property type="project" value="UniProtKB-SubCell"/>
</dbReference>
<dbReference type="GO" id="GO:0043204">
    <property type="term" value="C:perikaryon"/>
    <property type="evidence" value="ECO:0007669"/>
    <property type="project" value="UniProtKB-SubCell"/>
</dbReference>
<dbReference type="GO" id="GO:0005886">
    <property type="term" value="C:plasma membrane"/>
    <property type="evidence" value="ECO:0007669"/>
    <property type="project" value="UniProtKB-SubCell"/>
</dbReference>
<dbReference type="GO" id="GO:0055037">
    <property type="term" value="C:recycling endosome"/>
    <property type="evidence" value="ECO:0000250"/>
    <property type="project" value="UniProtKB"/>
</dbReference>
<dbReference type="GO" id="GO:0046872">
    <property type="term" value="F:metal ion binding"/>
    <property type="evidence" value="ECO:0007669"/>
    <property type="project" value="UniProtKB-KW"/>
</dbReference>
<dbReference type="GO" id="GO:0030546">
    <property type="term" value="F:signaling receptor activator activity"/>
    <property type="evidence" value="ECO:0007669"/>
    <property type="project" value="TreeGrafter"/>
</dbReference>
<dbReference type="GO" id="GO:0005102">
    <property type="term" value="F:signaling receptor binding"/>
    <property type="evidence" value="ECO:0007669"/>
    <property type="project" value="TreeGrafter"/>
</dbReference>
<dbReference type="GO" id="GO:0007409">
    <property type="term" value="P:axonogenesis"/>
    <property type="evidence" value="ECO:0007669"/>
    <property type="project" value="TreeGrafter"/>
</dbReference>
<dbReference type="GO" id="GO:0007417">
    <property type="term" value="P:central nervous system development"/>
    <property type="evidence" value="ECO:0007669"/>
    <property type="project" value="TreeGrafter"/>
</dbReference>
<dbReference type="CDD" id="cd21707">
    <property type="entry name" value="JMTM_APP"/>
    <property type="match status" value="1"/>
</dbReference>
<dbReference type="FunFam" id="4.10.230.10:FF:000001">
    <property type="entry name" value="Amyloid beta A4 protein"/>
    <property type="match status" value="1"/>
</dbReference>
<dbReference type="Gene3D" id="4.10.230.10">
    <property type="entry name" value="Amyloidogenic glycoprotein, amyloid-beta peptide"/>
    <property type="match status" value="1"/>
</dbReference>
<dbReference type="InterPro" id="IPR008155">
    <property type="entry name" value="Amyloid_glyco"/>
</dbReference>
<dbReference type="InterPro" id="IPR013803">
    <property type="entry name" value="Amyloid_glyco_Abeta"/>
</dbReference>
<dbReference type="InterPro" id="IPR037071">
    <property type="entry name" value="Amyloid_glyco_Abeta_sf"/>
</dbReference>
<dbReference type="PANTHER" id="PTHR23103">
    <property type="entry name" value="ALZHEIMER'S DISEASE BETA-AMYLOID RELATED"/>
    <property type="match status" value="1"/>
</dbReference>
<dbReference type="PANTHER" id="PTHR23103:SF7">
    <property type="entry name" value="AMYLOID-BETA PRECURSOR PROTEIN"/>
    <property type="match status" value="1"/>
</dbReference>
<dbReference type="Pfam" id="PF03494">
    <property type="entry name" value="Beta-APP"/>
    <property type="match status" value="1"/>
</dbReference>
<dbReference type="PRINTS" id="PR00204">
    <property type="entry name" value="BETAAMYLOID"/>
</dbReference>
<evidence type="ECO:0000250" key="1"/>
<evidence type="ECO:0000250" key="2">
    <source>
        <dbReference type="UniProtKB" id="P05067"/>
    </source>
</evidence>
<evidence type="ECO:0000250" key="3">
    <source>
        <dbReference type="UniProtKB" id="P12023"/>
    </source>
</evidence>
<evidence type="ECO:0000255" key="4"/>
<evidence type="ECO:0000305" key="5"/>
<reference key="1">
    <citation type="journal article" date="1991" name="Brain Res. Mol. Brain Res.">
        <title>Conservation of the sequence of the Alzheimer's disease amyloid peptide in dog, polar bear and five other mammals by cross-species polymerase chain reaction analysis.</title>
        <authorList>
            <person name="Johnstone E.M."/>
            <person name="Chaney M.O."/>
            <person name="Norris F.H."/>
            <person name="Pascual R."/>
            <person name="Little S.P."/>
        </authorList>
    </citation>
    <scope>NUCLEOTIDE SEQUENCE [MRNA]</scope>
    <source>
        <tissue>Brain</tissue>
    </source>
</reference>
<comment type="function">
    <text evidence="1 2">Functions as a cell surface receptor and performs physiological functions on the surface of neurons relevant to neurite growth, neuronal adhesion and axonogenesis. Interaction between APP molecules on neighboring cells promotes synaptogenesis. Involved in cell mobility and transcription regulation through protein-protein interactions (By similarity). Can promote transcription activation through binding to APBB1-KAT5 and inhibit Notch signaling through interaction with Numb (By similarity). Couples to apoptosis-inducing pathways such as those mediated by G(o) and JIP (By similarity). Inhibits G(o)-alpha ATPase activity (By similarity). Acts as a kinesin I membrane receptor, mediating the axonal transport of beta-secretase and presenilin 1 (By similarity). By acting as a kinesin I membrane receptor, plays a role in axonal anterograde transport of cargo towards synapses in axons (By similarity). May be involved in copper homeostasis/oxidative stress through copper ion reduction (By similarity). In vitro, copper-metallated APP induces neuronal death directly or is potentiated through Cu(2+)-mediated low-density lipoprotein oxidation (By similarity). Can regulate neurite outgrowth through binding to components of the extracellular matrix such as heparin and collagen I and IV. Induces a AGER-dependent pathway that involves activation of p38 MAPK, resulting in internalization of amyloid-beta peptide and mitochondrial dysfunction in cultured cortical neurons. Provides Cu(2+) ions for GPC1 which are required for release of nitric oxide (NO) and subsequent degradation of the heparan sulfate chains on GPC1 (By similarity).</text>
</comment>
<comment type="subunit">
    <text evidence="1 2 3">Binds, via its C-terminus, to the PID domain of several cytoplasmic proteins, including APBB family members, the APBA family, MAPK8IP1, SHC1 and NUMB and DAB1 (By similarity). Binding to DAB1 inhibits its serine phosphorylation (By similarity). Interacts (via NPXY motif) with DAB2 (via PID domain); the interaction is impaired by tyrosine phosphorylation of the NPXY motif. Also interacts with GPCR-like protein BPP, APPBP1, IB1, KNS2 (via its TPR domains), APPBP2 (via BaSS) and DDB1. In vitro, it binds MAPT via the MT-binding domains (By similarity). Associates with microtubules in the presence of ATP and in a kinesin-dependent manner (By similarity). Interacts, through a C-terminal domain, with GNAO1. Interacts with CPEB1, ANKS1B, TNFRSF21 and AGER (By similarity). Interacts with ITM2B. Interacts with ITM2C. Interacts with IDE. Can form homodimers; dimerization is enhanced in the presence of Cu(2+) ions. Can form homodimers; this is promoted by heparin binding (By similarity). Interacts with SORL1 (via N-terminal ectodomain); this interaction retains APP in the trans-Golgi network and reduces processing into soluble APP-alpha and amyloid-beta peptides (By similarity). Interacts with PLD3 (By similarity). Interacts with VDAC1 (By similarity). Interacts with NSG1; could regulate APP processing (By similarity). Amyloid-beta protein 42 interacts with FPR2 (By similarity). Interacts with LRRK2 (By similarity). Interacts (via cytoplasmic domain) with KIF5B (By similarity). Interacts (via C-terminus) with APBB2/FE65L1 (via C-terminus) (By similarity). Interacts (via intracellular domain) with APBB3 (By similarity).</text>
</comment>
<comment type="subcellular location">
    <subcellularLocation>
        <location evidence="2">Cell membrane</location>
        <topology evidence="2">Single-pass type I membrane protein</topology>
    </subcellularLocation>
    <subcellularLocation>
        <location evidence="2">Membrane</location>
        <topology evidence="2">Single-pass type I membrane protein</topology>
    </subcellularLocation>
    <subcellularLocation>
        <location evidence="2">Perikaryon</location>
    </subcellularLocation>
    <subcellularLocation>
        <location evidence="2">Cell projection</location>
        <location evidence="2">Growth cone</location>
    </subcellularLocation>
    <subcellularLocation>
        <location evidence="2">Membrane</location>
        <location evidence="2">Clathrin-coated pit</location>
    </subcellularLocation>
    <subcellularLocation>
        <location evidence="2">Early endosome</location>
    </subcellularLocation>
    <subcellularLocation>
        <location evidence="2">Cytoplasmic vesicle</location>
    </subcellularLocation>
    <text evidence="2">Cell surface protein that rapidly becomes internalized via clathrin-coated pits. Only a minor proportion is present at the cell membrane; most of the protein is present in intracellular vesicles. During maturation, the immature APP (N-glycosylated in the endoplasmic reticulum) moves to the Golgi complex where complete maturation occurs (O-glycosylated and sulfated). After alpha-secretase cleavage, soluble APP is released into the extracellular space and the C-terminal is internalized to endosomes and lysosomes. Some APP accumulates in secretory transport vesicles leaving the late Golgi compartment and returns to the cell surface.</text>
</comment>
<comment type="subcellular location">
    <molecule>Soluble APP-beta</molecule>
    <subcellularLocation>
        <location evidence="2">Secreted</location>
    </subcellularLocation>
</comment>
<comment type="subcellular location">
    <molecule>Amyloid-beta protein 42</molecule>
    <subcellularLocation>
        <location evidence="2">Cell surface</location>
    </subcellularLocation>
    <text evidence="2">Associates with FPR2 at the cell surface and the complex is then rapidly internalized.</text>
</comment>
<comment type="subcellular location">
    <molecule>Gamma-secretase C-terminal fragment 59</molecule>
    <subcellularLocation>
        <location evidence="2">Nucleus</location>
    </subcellularLocation>
    <subcellularLocation>
        <location evidence="2">Cytoplasm</location>
    </subcellularLocation>
    <text evidence="2 3">Located to both the cytoplasm and nuclei of neurons. It can be translocated to the nucleus through association with APBB1 (Fe65). In dopaminergic neurons, the phosphorylated form is localized to the nucleus (By similarity).</text>
</comment>
<comment type="PTM">
    <text evidence="2">Proteolytically processed under normal cellular conditions. Cleavage either by alpha-secretase, beta-secretase or theta-secretase leads to generation and extracellular release of soluble APP peptides, S-APP-alpha and S-APP-beta, and the retention of corresponding membrane-anchored C-terminal fragments, C80, C83 and C99. Subsequent processing of C80 and C83 by gamma-secretase yields P3 peptides. This is the major secretory pathway and is non-amyloidogenic. Alternatively, presenilin/nicastrin-mediated gamma-secretase processing of C99 releases the amyloid-beta proteins, amyloid-beta protein 40 and amyloid-beta protein 42, major components of amyloid plaques, and the cytotoxic C-terminal fragments, gamma-CTF(50), gamma-CTF(57) and gamma-CTF(59). PSEN1 cleavage is more efficient with C83 than with C99 as substrate (in vitro). Amyloid-beta protein 40 and Amyloid-beta protein 42 are cleaved by ACE. Many other minor amyloid-beta peptides, amyloid-beta 1-X peptides, are found in cerebral spinal fluid (CSF) including the amyloid-beta X-15 peptides, produced from the cleavage by alpha-secretase.</text>
</comment>
<comment type="similarity">
    <text evidence="5">Belongs to the APP family.</text>
</comment>
<sequence>SEVKMDAEFRHDSGYEVHHQKLVFFAEDVGSNKGAIIGLMVGGVVIATVIVITLVML</sequence>
<accession>Q29149</accession>
<protein>
    <recommendedName>
        <fullName evidence="2">Amyloid-beta precursor protein</fullName>
    </recommendedName>
    <alternativeName>
        <fullName>ABPP</fullName>
        <shortName>APP</shortName>
    </alternativeName>
    <alternativeName>
        <fullName>Alzheimer disease amyloid A4 protein homolog</fullName>
    </alternativeName>
    <alternativeName>
        <fullName>Alzheimer disease amyloid protein</fullName>
    </alternativeName>
    <alternativeName>
        <fullName evidence="5">Amyloid precursor protein</fullName>
    </alternativeName>
    <alternativeName>
        <fullName evidence="3">Amyloid-beta (A4) precursor protein</fullName>
    </alternativeName>
    <alternativeName>
        <fullName>Amyloid-beta A4 protein</fullName>
    </alternativeName>
    <component>
        <recommendedName>
            <fullName>Soluble APP-beta</fullName>
            <shortName>S-APP-beta</shortName>
        </recommendedName>
    </component>
    <component>
        <recommendedName>
            <fullName>CTF-alpha</fullName>
        </recommendedName>
    </component>
    <component>
        <recommendedName>
            <fullName>Amyloid-beta protein 42</fullName>
            <shortName>Abeta42</shortName>
        </recommendedName>
        <alternativeName>
            <fullName>Beta-APP42</fullName>
        </alternativeName>
    </component>
    <component>
        <recommendedName>
            <fullName>Amyloid-beta protein 40</fullName>
            <shortName>Abeta40</shortName>
        </recommendedName>
        <alternativeName>
            <fullName>Beta-APP40</fullName>
        </alternativeName>
    </component>
    <component>
        <recommendedName>
            <fullName>Gamma-secretase C-terminal fragment 59</fullName>
        </recommendedName>
        <alternativeName>
            <fullName>Gamma-CTF(59)</fullName>
        </alternativeName>
    </component>
    <component>
        <recommendedName>
            <fullName>Gamma-secretase C-terminal fragment 57</fullName>
        </recommendedName>
        <alternativeName>
            <fullName>Gamma-CTF(57)</fullName>
        </alternativeName>
    </component>
</protein>
<feature type="chain" id="PRO_0000226244" description="Amyloid-beta precursor protein">
    <location>
        <begin position="1" status="less than"/>
        <end position="57" status="greater than"/>
    </location>
</feature>
<feature type="chain" id="PRO_0000000191" description="Soluble APP-beta" evidence="1">
    <location>
        <begin position="1" status="less than"/>
        <end position="5"/>
    </location>
</feature>
<feature type="chain" id="PRO_0000000192" description="CTF-alpha" evidence="1">
    <location>
        <begin position="6"/>
        <end position="57" status="greater than"/>
    </location>
</feature>
<feature type="chain" id="PRO_0000000193" description="Amyloid-beta protein 42" evidence="2">
    <location>
        <begin position="6"/>
        <end position="47"/>
    </location>
</feature>
<feature type="chain" id="PRO_0000000194" description="Amyloid-beta protein 40" evidence="2">
    <location>
        <begin position="6"/>
        <end position="45"/>
    </location>
</feature>
<feature type="chain" id="PRO_0000000195" description="Gamma-secretase C-terminal fragment 59" evidence="1">
    <location>
        <begin position="46"/>
        <end position="57" status="greater than"/>
    </location>
</feature>
<feature type="chain" id="PRO_0000000196" description="Gamma-secretase C-terminal fragment 57" evidence="1">
    <location>
        <begin position="48"/>
        <end position="57" status="greater than"/>
    </location>
</feature>
<feature type="topological domain" description="Extracellular" evidence="4">
    <location>
        <begin position="1" status="less than"/>
        <end position="33"/>
    </location>
</feature>
<feature type="transmembrane region" description="Helical" evidence="4">
    <location>
        <begin position="34"/>
        <end position="57"/>
    </location>
</feature>
<feature type="binding site" evidence="2">
    <location>
        <position position="11"/>
    </location>
    <ligand>
        <name>Cu(2+)</name>
        <dbReference type="ChEBI" id="CHEBI:29036"/>
    </ligand>
</feature>
<feature type="binding site" evidence="2">
    <location>
        <position position="11"/>
    </location>
    <ligand>
        <name>Zn(2+)</name>
        <dbReference type="ChEBI" id="CHEBI:29105"/>
    </ligand>
</feature>
<feature type="binding site" evidence="2">
    <location>
        <position position="15"/>
    </location>
    <ligand>
        <name>Cu(2+)</name>
        <dbReference type="ChEBI" id="CHEBI:29036"/>
    </ligand>
</feature>
<feature type="binding site" evidence="2">
    <location>
        <position position="15"/>
    </location>
    <ligand>
        <name>Zn(2+)</name>
        <dbReference type="ChEBI" id="CHEBI:29105"/>
    </ligand>
</feature>
<feature type="binding site" evidence="2">
    <location>
        <position position="18"/>
    </location>
    <ligand>
        <name>Cu(2+)</name>
        <dbReference type="ChEBI" id="CHEBI:29036"/>
    </ligand>
</feature>
<feature type="binding site" evidence="2">
    <location>
        <position position="18"/>
    </location>
    <ligand>
        <name>Zn(2+)</name>
        <dbReference type="ChEBI" id="CHEBI:29105"/>
    </ligand>
</feature>
<feature type="binding site" evidence="2">
    <location>
        <position position="19"/>
    </location>
    <ligand>
        <name>Cu(2+)</name>
        <dbReference type="ChEBI" id="CHEBI:29036"/>
    </ligand>
</feature>
<feature type="binding site" evidence="2">
    <location>
        <position position="19"/>
    </location>
    <ligand>
        <name>Zn(2+)</name>
        <dbReference type="ChEBI" id="CHEBI:29105"/>
    </ligand>
</feature>
<feature type="site" description="Cleavage; by ACE" evidence="2">
    <location>
        <begin position="12"/>
        <end position="13"/>
    </location>
</feature>
<feature type="non-terminal residue">
    <location>
        <position position="1"/>
    </location>
</feature>
<feature type="non-terminal residue">
    <location>
        <position position="57"/>
    </location>
</feature>
<proteinExistence type="evidence at transcript level"/>
<keyword id="KW-0034">Amyloid</keyword>
<keyword id="KW-1003">Cell membrane</keyword>
<keyword id="KW-0966">Cell projection</keyword>
<keyword id="KW-0168">Coated pit</keyword>
<keyword id="KW-0186">Copper</keyword>
<keyword id="KW-0963">Cytoplasm</keyword>
<keyword id="KW-0968">Cytoplasmic vesicle</keyword>
<keyword id="KW-0967">Endosome</keyword>
<keyword id="KW-0472">Membrane</keyword>
<keyword id="KW-0479">Metal-binding</keyword>
<keyword id="KW-0539">Nucleus</keyword>
<keyword id="KW-1185">Reference proteome</keyword>
<keyword id="KW-0964">Secreted</keyword>
<keyword id="KW-0812">Transmembrane</keyword>
<keyword id="KW-1133">Transmembrane helix</keyword>
<keyword id="KW-0862">Zinc</keyword>
<name>A4_URSMA</name>
<organism>
    <name type="scientific">Ursus maritimus</name>
    <name type="common">Polar bear</name>
    <name type="synonym">Thalarctos maritimus</name>
    <dbReference type="NCBI Taxonomy" id="29073"/>
    <lineage>
        <taxon>Eukaryota</taxon>
        <taxon>Metazoa</taxon>
        <taxon>Chordata</taxon>
        <taxon>Craniata</taxon>
        <taxon>Vertebrata</taxon>
        <taxon>Euteleostomi</taxon>
        <taxon>Mammalia</taxon>
        <taxon>Eutheria</taxon>
        <taxon>Laurasiatheria</taxon>
        <taxon>Carnivora</taxon>
        <taxon>Caniformia</taxon>
        <taxon>Ursidae</taxon>
        <taxon>Ursus</taxon>
    </lineage>
</organism>